<organism>
    <name type="scientific">Arabidopsis thaliana</name>
    <name type="common">Mouse-ear cress</name>
    <dbReference type="NCBI Taxonomy" id="3702"/>
    <lineage>
        <taxon>Eukaryota</taxon>
        <taxon>Viridiplantae</taxon>
        <taxon>Streptophyta</taxon>
        <taxon>Embryophyta</taxon>
        <taxon>Tracheophyta</taxon>
        <taxon>Spermatophyta</taxon>
        <taxon>Magnoliopsida</taxon>
        <taxon>eudicotyledons</taxon>
        <taxon>Gunneridae</taxon>
        <taxon>Pentapetalae</taxon>
        <taxon>rosids</taxon>
        <taxon>malvids</taxon>
        <taxon>Brassicales</taxon>
        <taxon>Brassicaceae</taxon>
        <taxon>Camelineae</taxon>
        <taxon>Arabidopsis</taxon>
    </lineage>
</organism>
<proteinExistence type="evidence at transcript level"/>
<name>FRS9_ARATH</name>
<evidence type="ECO:0000255" key="1"/>
<evidence type="ECO:0000255" key="2">
    <source>
        <dbReference type="PROSITE-ProRule" id="PRU00325"/>
    </source>
</evidence>
<evidence type="ECO:0000256" key="3">
    <source>
        <dbReference type="SAM" id="MobiDB-lite"/>
    </source>
</evidence>
<evidence type="ECO:0000269" key="4">
    <source>
    </source>
</evidence>
<evidence type="ECO:0000305" key="5"/>
<accession>Q9SZL7</accession>
<accession>Q0WN40</accession>
<comment type="function">
    <text evidence="4">Putative transcription activator involved in regulating light control of development. May act as a negative regulator specific to phyB signaling.</text>
</comment>
<comment type="subcellular location">
    <subcellularLocation>
        <location evidence="4">Nucleus</location>
    </subcellularLocation>
    <text>The nuclear localization is independent of the light treatment.</text>
</comment>
<comment type="tissue specificity">
    <text evidence="4">Expressed in hypocotyls, rosette and cauline leaves, inflorescences stems, flowers and siliques.</text>
</comment>
<comment type="induction">
    <text evidence="4">Up-regulated in hypocotyls by far-red light treatment.</text>
</comment>
<comment type="similarity">
    <text evidence="5">Belongs to the FHY3/FAR1 family.</text>
</comment>
<comment type="sequence caution" evidence="5">
    <conflict type="miscellaneous discrepancy">
        <sequence resource="EMBL" id="BX827635"/>
    </conflict>
    <text>Sequencing errors.</text>
</comment>
<comment type="sequence caution" evidence="5">
    <conflict type="erroneous gene model prediction">
        <sequence resource="EMBL-CDS" id="CAB37557"/>
    </conflict>
</comment>
<comment type="sequence caution" evidence="5">
    <conflict type="erroneous gene model prediction">
        <sequence resource="EMBL-CDS" id="CAB80482"/>
    </conflict>
</comment>
<protein>
    <recommendedName>
        <fullName>Protein FAR1-RELATED SEQUENCE 9</fullName>
    </recommendedName>
</protein>
<keyword id="KW-0175">Coiled coil</keyword>
<keyword id="KW-0479">Metal-binding</keyword>
<keyword id="KW-0539">Nucleus</keyword>
<keyword id="KW-1185">Reference proteome</keyword>
<keyword id="KW-0862">Zinc</keyword>
<keyword id="KW-0863">Zinc-finger</keyword>
<feature type="chain" id="PRO_0000363487" description="Protein FAR1-RELATED SEQUENCE 9">
    <location>
        <begin position="1"/>
        <end position="545"/>
    </location>
</feature>
<feature type="domain" description="FAR1">
    <location>
        <begin position="22"/>
        <end position="65"/>
    </location>
</feature>
<feature type="domain" description="MULE">
    <location>
        <begin position="66"/>
        <end position="150"/>
    </location>
</feature>
<feature type="zinc finger region" description="SWIM-type" evidence="2">
    <location>
        <begin position="345"/>
        <end position="381"/>
    </location>
</feature>
<feature type="region of interest" description="Disordered" evidence="3">
    <location>
        <begin position="460"/>
        <end position="495"/>
    </location>
</feature>
<feature type="coiled-coil region" evidence="1">
    <location>
        <begin position="492"/>
        <end position="545"/>
    </location>
</feature>
<sequence>MAIIAVAELVEEVSMSRVEHVLNYLKRRQLENPGFLYAIEDDCGNVFWADPTCRLNYTYFGDTLVFDTTYRRGKRYQVPFAAFTGFNHHGQPVLFGCALILNESESSFAWLFQTWLQAMSAPPPPSITVEPDRLIQVAVSRVFSQTRLRFSQPLIFEETEEKLAHVFQAHPTFESEFINCVTETETAAEFEASWDSIVRRYYMEDNDWLQSIYNARQQWVRVFIRDTFYGELSTNEGSSILNSFFQGFVDASTTMQMLIKQYEKAIDSWREKELKADYEATNSTPVMKTPSPMEKQAASLYTRAAFIKFQEEFVETLAIPANIISDSGTHTTYRVAKFGEVHKGHTVSFDSLEVKANCSCQMFEYSGIICRHILAVFSAKNVLALPSRYLLRRWTKEAKIRGTEEQPEFSNGCQESLNLCFNSLRQEATKYVEEGAKSIQIYKVAMDALDEAAKKVAAASNRTPGTRLPNGEAYPSEEARETANATNHPGGEKERTILELTAELERTGQRCEVYRANLLSILRDMEEQKFQLSLKVQNARLSLKE</sequence>
<dbReference type="EMBL" id="AL035538">
    <property type="protein sequence ID" value="CAB37557.1"/>
    <property type="status" value="ALT_SEQ"/>
    <property type="molecule type" value="Genomic_DNA"/>
</dbReference>
<dbReference type="EMBL" id="AL161593">
    <property type="protein sequence ID" value="CAB80482.1"/>
    <property type="status" value="ALT_SEQ"/>
    <property type="molecule type" value="Genomic_DNA"/>
</dbReference>
<dbReference type="EMBL" id="CP002687">
    <property type="protein sequence ID" value="AEE86889.1"/>
    <property type="molecule type" value="Genomic_DNA"/>
</dbReference>
<dbReference type="EMBL" id="BX827635">
    <property type="status" value="NOT_ANNOTATED_CDS"/>
    <property type="molecule type" value="mRNA"/>
</dbReference>
<dbReference type="EMBL" id="AK229615">
    <property type="protein sequence ID" value="BAF01460.1"/>
    <property type="molecule type" value="mRNA"/>
</dbReference>
<dbReference type="PIR" id="T05644">
    <property type="entry name" value="T05644"/>
</dbReference>
<dbReference type="RefSeq" id="NP_195530.2">
    <property type="nucleotide sequence ID" value="NM_119978.4"/>
</dbReference>
<dbReference type="SMR" id="Q9SZL7"/>
<dbReference type="BioGRID" id="15253">
    <property type="interactions" value="4"/>
</dbReference>
<dbReference type="FunCoup" id="Q9SZL7">
    <property type="interactions" value="252"/>
</dbReference>
<dbReference type="IntAct" id="Q9SZL7">
    <property type="interactions" value="5"/>
</dbReference>
<dbReference type="STRING" id="3702.Q9SZL7"/>
<dbReference type="PaxDb" id="3702-AT4G38170.1"/>
<dbReference type="ProteomicsDB" id="228917"/>
<dbReference type="EnsemblPlants" id="AT4G38170.1">
    <property type="protein sequence ID" value="AT4G38170.1"/>
    <property type="gene ID" value="AT4G38170"/>
</dbReference>
<dbReference type="GeneID" id="829973"/>
<dbReference type="Gramene" id="AT4G38170.1">
    <property type="protein sequence ID" value="AT4G38170.1"/>
    <property type="gene ID" value="AT4G38170"/>
</dbReference>
<dbReference type="KEGG" id="ath:AT4G38170"/>
<dbReference type="Araport" id="AT4G38170"/>
<dbReference type="TAIR" id="AT4G38170">
    <property type="gene designation" value="FRS9"/>
</dbReference>
<dbReference type="eggNOG" id="ENOG502QR48">
    <property type="taxonomic scope" value="Eukaryota"/>
</dbReference>
<dbReference type="HOGENOM" id="CLU_008459_7_3_1"/>
<dbReference type="InParanoid" id="Q9SZL7"/>
<dbReference type="OMA" id="RRWTKEA"/>
<dbReference type="PRO" id="PR:Q9SZL7"/>
<dbReference type="Proteomes" id="UP000006548">
    <property type="component" value="Chromosome 4"/>
</dbReference>
<dbReference type="ExpressionAtlas" id="Q9SZL7">
    <property type="expression patterns" value="baseline and differential"/>
</dbReference>
<dbReference type="GO" id="GO:0005634">
    <property type="term" value="C:nucleus"/>
    <property type="evidence" value="ECO:0007669"/>
    <property type="project" value="UniProtKB-SubCell"/>
</dbReference>
<dbReference type="GO" id="GO:0008270">
    <property type="term" value="F:zinc ion binding"/>
    <property type="evidence" value="ECO:0007669"/>
    <property type="project" value="UniProtKB-KW"/>
</dbReference>
<dbReference type="GO" id="GO:0006355">
    <property type="term" value="P:regulation of DNA-templated transcription"/>
    <property type="evidence" value="ECO:0007669"/>
    <property type="project" value="InterPro"/>
</dbReference>
<dbReference type="InterPro" id="IPR031052">
    <property type="entry name" value="FHY3/FAR1"/>
</dbReference>
<dbReference type="InterPro" id="IPR018289">
    <property type="entry name" value="MULE_transposase_dom"/>
</dbReference>
<dbReference type="InterPro" id="IPR006564">
    <property type="entry name" value="Znf_PMZ"/>
</dbReference>
<dbReference type="InterPro" id="IPR007527">
    <property type="entry name" value="Znf_SWIM"/>
</dbReference>
<dbReference type="PANTHER" id="PTHR31669">
    <property type="entry name" value="PROTEIN FAR1-RELATED SEQUENCE 10-RELATED"/>
    <property type="match status" value="1"/>
</dbReference>
<dbReference type="PANTHER" id="PTHR31669:SF240">
    <property type="entry name" value="PROTEIN FAR1-RELATED SEQUENCE 9"/>
    <property type="match status" value="1"/>
</dbReference>
<dbReference type="Pfam" id="PF10551">
    <property type="entry name" value="MULE"/>
    <property type="match status" value="1"/>
</dbReference>
<dbReference type="Pfam" id="PF04434">
    <property type="entry name" value="SWIM"/>
    <property type="match status" value="1"/>
</dbReference>
<dbReference type="SMART" id="SM00575">
    <property type="entry name" value="ZnF_PMZ"/>
    <property type="match status" value="1"/>
</dbReference>
<dbReference type="PROSITE" id="PS50966">
    <property type="entry name" value="ZF_SWIM"/>
    <property type="match status" value="1"/>
</dbReference>
<reference key="1">
    <citation type="journal article" date="1999" name="Nature">
        <title>Sequence and analysis of chromosome 4 of the plant Arabidopsis thaliana.</title>
        <authorList>
            <person name="Mayer K.F.X."/>
            <person name="Schueller C."/>
            <person name="Wambutt R."/>
            <person name="Murphy G."/>
            <person name="Volckaert G."/>
            <person name="Pohl T."/>
            <person name="Duesterhoeft A."/>
            <person name="Stiekema W."/>
            <person name="Entian K.-D."/>
            <person name="Terryn N."/>
            <person name="Harris B."/>
            <person name="Ansorge W."/>
            <person name="Brandt P."/>
            <person name="Grivell L.A."/>
            <person name="Rieger M."/>
            <person name="Weichselgartner M."/>
            <person name="de Simone V."/>
            <person name="Obermaier B."/>
            <person name="Mache R."/>
            <person name="Mueller M."/>
            <person name="Kreis M."/>
            <person name="Delseny M."/>
            <person name="Puigdomenech P."/>
            <person name="Watson M."/>
            <person name="Schmidtheini T."/>
            <person name="Reichert B."/>
            <person name="Portetelle D."/>
            <person name="Perez-Alonso M."/>
            <person name="Boutry M."/>
            <person name="Bancroft I."/>
            <person name="Vos P."/>
            <person name="Hoheisel J."/>
            <person name="Zimmermann W."/>
            <person name="Wedler H."/>
            <person name="Ridley P."/>
            <person name="Langham S.-A."/>
            <person name="McCullagh B."/>
            <person name="Bilham L."/>
            <person name="Robben J."/>
            <person name="van der Schueren J."/>
            <person name="Grymonprez B."/>
            <person name="Chuang Y.-J."/>
            <person name="Vandenbussche F."/>
            <person name="Braeken M."/>
            <person name="Weltjens I."/>
            <person name="Voet M."/>
            <person name="Bastiaens I."/>
            <person name="Aert R."/>
            <person name="Defoor E."/>
            <person name="Weitzenegger T."/>
            <person name="Bothe G."/>
            <person name="Ramsperger U."/>
            <person name="Hilbert H."/>
            <person name="Braun M."/>
            <person name="Holzer E."/>
            <person name="Brandt A."/>
            <person name="Peters S."/>
            <person name="van Staveren M."/>
            <person name="Dirkse W."/>
            <person name="Mooijman P."/>
            <person name="Klein Lankhorst R."/>
            <person name="Rose M."/>
            <person name="Hauf J."/>
            <person name="Koetter P."/>
            <person name="Berneiser S."/>
            <person name="Hempel S."/>
            <person name="Feldpausch M."/>
            <person name="Lamberth S."/>
            <person name="Van den Daele H."/>
            <person name="De Keyser A."/>
            <person name="Buysshaert C."/>
            <person name="Gielen J."/>
            <person name="Villarroel R."/>
            <person name="De Clercq R."/>
            <person name="van Montagu M."/>
            <person name="Rogers J."/>
            <person name="Cronin A."/>
            <person name="Quail M.A."/>
            <person name="Bray-Allen S."/>
            <person name="Clark L."/>
            <person name="Doggett J."/>
            <person name="Hall S."/>
            <person name="Kay M."/>
            <person name="Lennard N."/>
            <person name="McLay K."/>
            <person name="Mayes R."/>
            <person name="Pettett A."/>
            <person name="Rajandream M.A."/>
            <person name="Lyne M."/>
            <person name="Benes V."/>
            <person name="Rechmann S."/>
            <person name="Borkova D."/>
            <person name="Bloecker H."/>
            <person name="Scharfe M."/>
            <person name="Grimm M."/>
            <person name="Loehnert T.-H."/>
            <person name="Dose S."/>
            <person name="de Haan M."/>
            <person name="Maarse A.C."/>
            <person name="Schaefer M."/>
            <person name="Mueller-Auer S."/>
            <person name="Gabel C."/>
            <person name="Fuchs M."/>
            <person name="Fartmann B."/>
            <person name="Granderath K."/>
            <person name="Dauner D."/>
            <person name="Herzl A."/>
            <person name="Neumann S."/>
            <person name="Argiriou A."/>
            <person name="Vitale D."/>
            <person name="Liguori R."/>
            <person name="Piravandi E."/>
            <person name="Massenet O."/>
            <person name="Quigley F."/>
            <person name="Clabauld G."/>
            <person name="Muendlein A."/>
            <person name="Felber R."/>
            <person name="Schnabl S."/>
            <person name="Hiller R."/>
            <person name="Schmidt W."/>
            <person name="Lecharny A."/>
            <person name="Aubourg S."/>
            <person name="Chefdor F."/>
            <person name="Cooke R."/>
            <person name="Berger C."/>
            <person name="Monfort A."/>
            <person name="Casacuberta E."/>
            <person name="Gibbons T."/>
            <person name="Weber N."/>
            <person name="Vandenbol M."/>
            <person name="Bargues M."/>
            <person name="Terol J."/>
            <person name="Torres A."/>
            <person name="Perez-Perez A."/>
            <person name="Purnelle B."/>
            <person name="Bent E."/>
            <person name="Johnson S."/>
            <person name="Tacon D."/>
            <person name="Jesse T."/>
            <person name="Heijnen L."/>
            <person name="Schwarz S."/>
            <person name="Scholler P."/>
            <person name="Heber S."/>
            <person name="Francs P."/>
            <person name="Bielke C."/>
            <person name="Frishman D."/>
            <person name="Haase D."/>
            <person name="Lemcke K."/>
            <person name="Mewes H.-W."/>
            <person name="Stocker S."/>
            <person name="Zaccaria P."/>
            <person name="Bevan M."/>
            <person name="Wilson R.K."/>
            <person name="de la Bastide M."/>
            <person name="Habermann K."/>
            <person name="Parnell L."/>
            <person name="Dedhia N."/>
            <person name="Gnoj L."/>
            <person name="Schutz K."/>
            <person name="Huang E."/>
            <person name="Spiegel L."/>
            <person name="Sekhon M."/>
            <person name="Murray J."/>
            <person name="Sheet P."/>
            <person name="Cordes M."/>
            <person name="Abu-Threideh J."/>
            <person name="Stoneking T."/>
            <person name="Kalicki J."/>
            <person name="Graves T."/>
            <person name="Harmon G."/>
            <person name="Edwards J."/>
            <person name="Latreille P."/>
            <person name="Courtney L."/>
            <person name="Cloud J."/>
            <person name="Abbott A."/>
            <person name="Scott K."/>
            <person name="Johnson D."/>
            <person name="Minx P."/>
            <person name="Bentley D."/>
            <person name="Fulton B."/>
            <person name="Miller N."/>
            <person name="Greco T."/>
            <person name="Kemp K."/>
            <person name="Kramer J."/>
            <person name="Fulton L."/>
            <person name="Mardis E."/>
            <person name="Dante M."/>
            <person name="Pepin K."/>
            <person name="Hillier L.W."/>
            <person name="Nelson J."/>
            <person name="Spieth J."/>
            <person name="Ryan E."/>
            <person name="Andrews S."/>
            <person name="Geisel C."/>
            <person name="Layman D."/>
            <person name="Du H."/>
            <person name="Ali J."/>
            <person name="Berghoff A."/>
            <person name="Jones K."/>
            <person name="Drone K."/>
            <person name="Cotton M."/>
            <person name="Joshu C."/>
            <person name="Antonoiu B."/>
            <person name="Zidanic M."/>
            <person name="Strong C."/>
            <person name="Sun H."/>
            <person name="Lamar B."/>
            <person name="Yordan C."/>
            <person name="Ma P."/>
            <person name="Zhong J."/>
            <person name="Preston R."/>
            <person name="Vil D."/>
            <person name="Shekher M."/>
            <person name="Matero A."/>
            <person name="Shah R."/>
            <person name="Swaby I.K."/>
            <person name="O'Shaughnessy A."/>
            <person name="Rodriguez M."/>
            <person name="Hoffman J."/>
            <person name="Till S."/>
            <person name="Granat S."/>
            <person name="Shohdy N."/>
            <person name="Hasegawa A."/>
            <person name="Hameed A."/>
            <person name="Lodhi M."/>
            <person name="Johnson A."/>
            <person name="Chen E."/>
            <person name="Marra M.A."/>
            <person name="Martienssen R."/>
            <person name="McCombie W.R."/>
        </authorList>
    </citation>
    <scope>NUCLEOTIDE SEQUENCE [LARGE SCALE GENOMIC DNA]</scope>
    <source>
        <strain>cv. Columbia</strain>
    </source>
</reference>
<reference key="2">
    <citation type="journal article" date="2017" name="Plant J.">
        <title>Araport11: a complete reannotation of the Arabidopsis thaliana reference genome.</title>
        <authorList>
            <person name="Cheng C.Y."/>
            <person name="Krishnakumar V."/>
            <person name="Chan A.P."/>
            <person name="Thibaud-Nissen F."/>
            <person name="Schobel S."/>
            <person name="Town C.D."/>
        </authorList>
    </citation>
    <scope>GENOME REANNOTATION</scope>
    <source>
        <strain>cv. Columbia</strain>
    </source>
</reference>
<reference key="3">
    <citation type="journal article" date="2004" name="Genome Res.">
        <title>Whole genome sequence comparisons and 'full-length' cDNA sequences: a combined approach to evaluate and improve Arabidopsis genome annotation.</title>
        <authorList>
            <person name="Castelli V."/>
            <person name="Aury J.-M."/>
            <person name="Jaillon O."/>
            <person name="Wincker P."/>
            <person name="Clepet C."/>
            <person name="Menard M."/>
            <person name="Cruaud C."/>
            <person name="Quetier F."/>
            <person name="Scarpelli C."/>
            <person name="Schaechter V."/>
            <person name="Temple G."/>
            <person name="Caboche M."/>
            <person name="Weissenbach J."/>
            <person name="Salanoubat M."/>
        </authorList>
    </citation>
    <scope>NUCLEOTIDE SEQUENCE [LARGE SCALE MRNA]</scope>
    <source>
        <strain>cv. Columbia</strain>
    </source>
</reference>
<reference key="4">
    <citation type="submission" date="2006-07" db="EMBL/GenBank/DDBJ databases">
        <title>Large-scale analysis of RIKEN Arabidopsis full-length (RAFL) cDNAs.</title>
        <authorList>
            <person name="Totoki Y."/>
            <person name="Seki M."/>
            <person name="Ishida J."/>
            <person name="Nakajima M."/>
            <person name="Enju A."/>
            <person name="Kamiya A."/>
            <person name="Narusaka M."/>
            <person name="Shin-i T."/>
            <person name="Nakagawa M."/>
            <person name="Sakamoto N."/>
            <person name="Oishi K."/>
            <person name="Kohara Y."/>
            <person name="Kobayashi M."/>
            <person name="Toyoda A."/>
            <person name="Sakaki Y."/>
            <person name="Sakurai T."/>
            <person name="Iida K."/>
            <person name="Akiyama K."/>
            <person name="Satou M."/>
            <person name="Toyoda T."/>
            <person name="Konagaya A."/>
            <person name="Carninci P."/>
            <person name="Kawai J."/>
            <person name="Hayashizaki Y."/>
            <person name="Shinozaki K."/>
        </authorList>
    </citation>
    <scope>NUCLEOTIDE SEQUENCE [LARGE SCALE MRNA] OF 268-545</scope>
    <source>
        <strain>cv. Columbia</strain>
    </source>
</reference>
<reference key="5">
    <citation type="journal article" date="2004" name="Plant Physiol.">
        <title>Arabidopsis FHY3/FAR1 gene family and distinct roles of its members in light control of Arabidopsis development.</title>
        <authorList>
            <person name="Lin R."/>
            <person name="Wang H."/>
        </authorList>
    </citation>
    <scope>FUNCTION</scope>
    <scope>TISSUE SPECIFICITY</scope>
    <scope>INDUCTION</scope>
    <scope>SUBCELLULAR LOCATION</scope>
    <scope>GENE FAMILY</scope>
    <scope>NOMENCLATURE</scope>
</reference>
<gene>
    <name type="primary">FRS9</name>
    <name type="ordered locus">At4g38170</name>
    <name type="ORF">F20D10.290</name>
</gene>